<proteinExistence type="inferred from homology"/>
<comment type="function">
    <text evidence="1">F(1)F(0) ATP synthase produces ATP from ADP in the presence of a proton or sodium gradient. F-type ATPases consist of two structural domains, F(1) containing the extramembraneous catalytic core and F(0) containing the membrane proton channel, linked together by a central stalk and a peripheral stalk. During catalysis, ATP synthesis in the catalytic domain of F(1) is coupled via a rotary mechanism of the central stalk subunits to proton translocation.</text>
</comment>
<comment type="function">
    <text evidence="1">Key component of the F(0) channel; it plays a direct role in translocation across the membrane. A homomeric c-ring of between 10-14 subunits forms the central stalk rotor element with the F(1) delta and epsilon subunits.</text>
</comment>
<comment type="subunit">
    <text evidence="1">F-type ATPases have 2 components, F(1) - the catalytic core - and F(0) - the membrane proton channel. F(1) has five subunits: alpha(3), beta(3), gamma(1), delta(1), epsilon(1). F(0) has four main subunits: a(1), b(1), b'(1) and c(10-14). The alpha and beta chains form an alternating ring which encloses part of the gamma chain. F(1) is attached to F(0) by a central stalk formed by the gamma and epsilon chains, while a peripheral stalk is formed by the delta, b and b' chains.</text>
</comment>
<comment type="subcellular location">
    <subcellularLocation>
        <location evidence="1">Plastid</location>
        <location evidence="1">Chloroplast thylakoid membrane</location>
        <topology evidence="1">Multi-pass membrane protein</topology>
    </subcellularLocation>
</comment>
<comment type="miscellaneous">
    <text>In plastids the F-type ATPase is also known as CF(1)CF(0).</text>
</comment>
<comment type="similarity">
    <text evidence="1">Belongs to the ATPase C chain family.</text>
</comment>
<reference key="1">
    <citation type="journal article" date="2007" name="Theor. Appl. Genet.">
        <title>Complete chloroplast genome sequences of Hordeum vulgare, Sorghum bicolor and Agrostis stolonifera, and comparative analyses with other grass genomes.</title>
        <authorList>
            <person name="Saski C."/>
            <person name="Lee S.-B."/>
            <person name="Fjellheim S."/>
            <person name="Guda C."/>
            <person name="Jansen R.K."/>
            <person name="Luo H."/>
            <person name="Tomkins J."/>
            <person name="Rognli O.A."/>
            <person name="Daniell H."/>
            <person name="Clarke J.L."/>
        </authorList>
    </citation>
    <scope>NUCLEOTIDE SEQUENCE [LARGE SCALE GENOMIC DNA]</scope>
    <source>
        <strain>cv. BTx623</strain>
    </source>
</reference>
<sequence length="81" mass="7974">MNPLIAAASVIAAGLAVGLASIGPGVGQGTAAGQAVEGIARQPEAEGKIRGTLLLSLAFMEALTIYGLVVALALLFANPFV</sequence>
<keyword id="KW-0066">ATP synthesis</keyword>
<keyword id="KW-0138">CF(0)</keyword>
<keyword id="KW-0150">Chloroplast</keyword>
<keyword id="KW-0375">Hydrogen ion transport</keyword>
<keyword id="KW-0406">Ion transport</keyword>
<keyword id="KW-0446">Lipid-binding</keyword>
<keyword id="KW-0472">Membrane</keyword>
<keyword id="KW-0934">Plastid</keyword>
<keyword id="KW-1185">Reference proteome</keyword>
<keyword id="KW-0793">Thylakoid</keyword>
<keyword id="KW-0812">Transmembrane</keyword>
<keyword id="KW-1133">Transmembrane helix</keyword>
<keyword id="KW-0813">Transport</keyword>
<dbReference type="EMBL" id="EF115542">
    <property type="protein sequence ID" value="ABK79491.1"/>
    <property type="molecule type" value="Genomic_DNA"/>
</dbReference>
<dbReference type="RefSeq" id="YP_899402.1">
    <property type="nucleotide sequence ID" value="NC_008602.1"/>
</dbReference>
<dbReference type="SMR" id="A1E9R9"/>
<dbReference type="FunCoup" id="A1E9R9">
    <property type="interactions" value="160"/>
</dbReference>
<dbReference type="STRING" id="4558.A1E9R9"/>
<dbReference type="GeneID" id="4549113"/>
<dbReference type="KEGG" id="sbi:4549113"/>
<dbReference type="eggNOG" id="KOG0232">
    <property type="taxonomic scope" value="Eukaryota"/>
</dbReference>
<dbReference type="InParanoid" id="A1E9R9"/>
<dbReference type="OrthoDB" id="689995at2759"/>
<dbReference type="Proteomes" id="UP000000768">
    <property type="component" value="Chloroplast"/>
</dbReference>
<dbReference type="GO" id="GO:0009535">
    <property type="term" value="C:chloroplast thylakoid membrane"/>
    <property type="evidence" value="ECO:0007669"/>
    <property type="project" value="UniProtKB-SubCell"/>
</dbReference>
<dbReference type="GO" id="GO:0045259">
    <property type="term" value="C:proton-transporting ATP synthase complex"/>
    <property type="evidence" value="ECO:0007669"/>
    <property type="project" value="UniProtKB-KW"/>
</dbReference>
<dbReference type="GO" id="GO:0033177">
    <property type="term" value="C:proton-transporting two-sector ATPase complex, proton-transporting domain"/>
    <property type="evidence" value="ECO:0007669"/>
    <property type="project" value="InterPro"/>
</dbReference>
<dbReference type="GO" id="GO:0008289">
    <property type="term" value="F:lipid binding"/>
    <property type="evidence" value="ECO:0007669"/>
    <property type="project" value="UniProtKB-KW"/>
</dbReference>
<dbReference type="GO" id="GO:0046933">
    <property type="term" value="F:proton-transporting ATP synthase activity, rotational mechanism"/>
    <property type="evidence" value="ECO:0007669"/>
    <property type="project" value="UniProtKB-UniRule"/>
</dbReference>
<dbReference type="GO" id="GO:0015986">
    <property type="term" value="P:proton motive force-driven ATP synthesis"/>
    <property type="evidence" value="ECO:0000318"/>
    <property type="project" value="GO_Central"/>
</dbReference>
<dbReference type="CDD" id="cd18183">
    <property type="entry name" value="ATP-synt_Fo_c_ATPH"/>
    <property type="match status" value="1"/>
</dbReference>
<dbReference type="FunFam" id="1.20.20.10:FF:000001">
    <property type="entry name" value="ATP synthase subunit c, chloroplastic"/>
    <property type="match status" value="1"/>
</dbReference>
<dbReference type="Gene3D" id="1.20.20.10">
    <property type="entry name" value="F1F0 ATP synthase subunit C"/>
    <property type="match status" value="1"/>
</dbReference>
<dbReference type="HAMAP" id="MF_01396">
    <property type="entry name" value="ATP_synth_c_bact"/>
    <property type="match status" value="1"/>
</dbReference>
<dbReference type="InterPro" id="IPR005953">
    <property type="entry name" value="ATP_synth_csu_bac/chlpt"/>
</dbReference>
<dbReference type="InterPro" id="IPR000454">
    <property type="entry name" value="ATP_synth_F0_csu"/>
</dbReference>
<dbReference type="InterPro" id="IPR020537">
    <property type="entry name" value="ATP_synth_F0_csu_DDCD_BS"/>
</dbReference>
<dbReference type="InterPro" id="IPR038662">
    <property type="entry name" value="ATP_synth_F0_csu_sf"/>
</dbReference>
<dbReference type="InterPro" id="IPR002379">
    <property type="entry name" value="ATPase_proteolipid_c-like_dom"/>
</dbReference>
<dbReference type="InterPro" id="IPR035921">
    <property type="entry name" value="F/V-ATP_Csub_sf"/>
</dbReference>
<dbReference type="NCBIfam" id="TIGR01260">
    <property type="entry name" value="ATP_synt_c"/>
    <property type="match status" value="1"/>
</dbReference>
<dbReference type="NCBIfam" id="NF005608">
    <property type="entry name" value="PRK07354.1"/>
    <property type="match status" value="1"/>
</dbReference>
<dbReference type="PANTHER" id="PTHR10031">
    <property type="entry name" value="ATP SYNTHASE LIPID-BINDING PROTEIN, MITOCHONDRIAL"/>
    <property type="match status" value="1"/>
</dbReference>
<dbReference type="PANTHER" id="PTHR10031:SF0">
    <property type="entry name" value="ATPASE PROTEIN 9"/>
    <property type="match status" value="1"/>
</dbReference>
<dbReference type="Pfam" id="PF00137">
    <property type="entry name" value="ATP-synt_C"/>
    <property type="match status" value="1"/>
</dbReference>
<dbReference type="PRINTS" id="PR00124">
    <property type="entry name" value="ATPASEC"/>
</dbReference>
<dbReference type="SUPFAM" id="SSF81333">
    <property type="entry name" value="F1F0 ATP synthase subunit C"/>
    <property type="match status" value="1"/>
</dbReference>
<dbReference type="PROSITE" id="PS00605">
    <property type="entry name" value="ATPASE_C"/>
    <property type="match status" value="1"/>
</dbReference>
<name>ATPH_SORBI</name>
<accession>A1E9R9</accession>
<organism>
    <name type="scientific">Sorghum bicolor</name>
    <name type="common">Sorghum</name>
    <name type="synonym">Sorghum vulgare</name>
    <dbReference type="NCBI Taxonomy" id="4558"/>
    <lineage>
        <taxon>Eukaryota</taxon>
        <taxon>Viridiplantae</taxon>
        <taxon>Streptophyta</taxon>
        <taxon>Embryophyta</taxon>
        <taxon>Tracheophyta</taxon>
        <taxon>Spermatophyta</taxon>
        <taxon>Magnoliopsida</taxon>
        <taxon>Liliopsida</taxon>
        <taxon>Poales</taxon>
        <taxon>Poaceae</taxon>
        <taxon>PACMAD clade</taxon>
        <taxon>Panicoideae</taxon>
        <taxon>Andropogonodae</taxon>
        <taxon>Andropogoneae</taxon>
        <taxon>Sorghinae</taxon>
        <taxon>Sorghum</taxon>
    </lineage>
</organism>
<protein>
    <recommendedName>
        <fullName evidence="1">ATP synthase subunit c, chloroplastic</fullName>
    </recommendedName>
    <alternativeName>
        <fullName evidence="1">ATP synthase F(0) sector subunit c</fullName>
    </alternativeName>
    <alternativeName>
        <fullName evidence="1">ATPase subunit III</fullName>
    </alternativeName>
    <alternativeName>
        <fullName evidence="1">F-type ATPase subunit c</fullName>
        <shortName evidence="1">F-ATPase subunit c</shortName>
    </alternativeName>
    <alternativeName>
        <fullName evidence="1">Lipid-binding protein</fullName>
    </alternativeName>
</protein>
<feature type="chain" id="PRO_0000362963" description="ATP synthase subunit c, chloroplastic">
    <location>
        <begin position="1"/>
        <end position="81"/>
    </location>
</feature>
<feature type="transmembrane region" description="Helical" evidence="1">
    <location>
        <begin position="3"/>
        <end position="23"/>
    </location>
</feature>
<feature type="transmembrane region" description="Helical" evidence="1">
    <location>
        <begin position="57"/>
        <end position="77"/>
    </location>
</feature>
<feature type="site" description="Reversibly protonated during proton transport" evidence="1">
    <location>
        <position position="61"/>
    </location>
</feature>
<evidence type="ECO:0000255" key="1">
    <source>
        <dbReference type="HAMAP-Rule" id="MF_01396"/>
    </source>
</evidence>
<geneLocation type="chloroplast"/>
<gene>
    <name evidence="1" type="primary">atpH</name>
</gene>